<proteinExistence type="evidence at transcript level"/>
<gene>
    <name evidence="7" type="primary">islA</name>
    <name evidence="10" type="ordered locus">Dde_1273</name>
</gene>
<protein>
    <recommendedName>
        <fullName evidence="7">Isethionate sulfite-lyase</fullName>
        <ecNumber evidence="1 9">4.4.1.38</ecNumber>
    </recommendedName>
    <alternativeName>
        <fullName evidence="7">Glycyl radical enzyme IslA</fullName>
        <shortName evidence="7">GRE IslA</shortName>
    </alternativeName>
</protein>
<comment type="function">
    <text evidence="9">Involved in an anaerobic respiration pathway that converts the sulfonate isethionate (2-hydroxyethanesulfonate) to ammonia, acetate and sulfide. Catalyzes the radical-mediated C-S bond cleavage of isethionate (2-hydroxyethanesulfonate) to form sulfite and acetaldehyde.</text>
</comment>
<comment type="catalytic activity">
    <reaction evidence="1 9">
        <text>2-hydroxyethane-1-sulfonate = acetaldehyde + sulfite + H(+)</text>
        <dbReference type="Rhea" id="RHEA:60452"/>
        <dbReference type="ChEBI" id="CHEBI:15343"/>
        <dbReference type="ChEBI" id="CHEBI:15378"/>
        <dbReference type="ChEBI" id="CHEBI:17359"/>
        <dbReference type="ChEBI" id="CHEBI:61904"/>
        <dbReference type="EC" id="4.4.1.38"/>
    </reaction>
    <physiologicalReaction direction="left-to-right" evidence="6">
        <dbReference type="Rhea" id="RHEA:60453"/>
    </physiologicalReaction>
</comment>
<comment type="pathway">
    <text evidence="6">Organosulfur degradation; alkanesulfonate degradation.</text>
</comment>
<comment type="subunit">
    <text evidence="3">Homodimer.</text>
</comment>
<comment type="induction">
    <text evidence="6">Highly up-regulated in the presence of isethionate.</text>
</comment>
<comment type="PTM">
    <text evidence="1">Requires the activating protein IslB to generate the key active site glycyl radical on Gly-804 that is involved in catalysis.</text>
</comment>
<comment type="disruption phenotype">
    <text evidence="6">Cells lacking this gene lose the ability to grow with isethionate as the terminal electron acceptor.</text>
</comment>
<comment type="similarity">
    <text evidence="8">Belongs to the glycyl radical enzyme (GRE) family.</text>
</comment>
<name>ISLA_OLEA2</name>
<sequence length="829" mass="94135">MQCCTTPLSPHEQRLQDKIAGKEDSFRKSHERVFNILDSFDGKRPRIDVERAKLFTDSMKETEGQPLVLRWAKAMKHVAEHITVYIDDDQLICGRGGCPGRYGVLYPELDGDFLDLAIEDLPNRTESPFTITEADARVVVEEIAPYWKGKTYHEDLNLALPSDVHKLTYDDPQGLKSRFIVNETSSFRSSIQWVHDYEKVLKRGFRGLKEEAQEKIAGLDPLSPRDNVEKRPFLEAIVIVCDAIILWANRHAKLAADMAAAETNPVRKAELETMAEICAWVPENPARNFYEAVQAQWFTQMFSRLEQKTGTIVSNGRMDQYFWPFYRKDIEEGRITEESALELLECMWVGMAQYVDLYISPAGGAFNEGYAHWEAVTIGGQTPQGLDATNDLTYLFLKSKREFPLHYPDLAARIHSRSPERYLHDVAETIKFGSGFPKLINDEEIVPLYVSKGASFEEALDYAVSGCTEARMPNRDTYTSGGAYINFAAALEMVLYNGRMLKYGENELGLETGDPTRFETWEEFWNAYVLQHEHFLRAAFIQQHIINNVRARHFAQPMGSALHDLCMKHCLDLHTPQIPEGINLGYFEYMGFGTVVDSLAAIKKLVFEDKKLTMQEVIEALKCNFEGKEDVQQMLKSAPCYGNNDEYADSIAREIDAISVKYGRRYSPELGMHNDVRYVPFTSHVPFGKVVSATPNGRLAWTPLSDGSSASHGADVNGPTAVLQSNFSSKNYGYRDRAARMLNIKFTPKCVEGDEGTEKLVSFIRTFCDLKLWHVQFNVINRDTLIAAQKDPEKYRSLIVRIAGYSAYFVDLSPDLQNDLIARTQHDAM</sequence>
<dbReference type="EC" id="4.4.1.38" evidence="1 9"/>
<dbReference type="EMBL" id="CP000112">
    <property type="protein sequence ID" value="ABB38074.1"/>
    <property type="molecule type" value="Genomic_DNA"/>
</dbReference>
<dbReference type="RefSeq" id="WP_011367272.1">
    <property type="nucleotide sequence ID" value="NC_007519.1"/>
</dbReference>
<dbReference type="SMR" id="Q312S2"/>
<dbReference type="STRING" id="207559.Dde_1273"/>
<dbReference type="KEGG" id="dde:Dde_1273"/>
<dbReference type="eggNOG" id="COG1882">
    <property type="taxonomic scope" value="Bacteria"/>
</dbReference>
<dbReference type="HOGENOM" id="CLU_009096_0_1_7"/>
<dbReference type="UniPathway" id="UPA00338"/>
<dbReference type="Proteomes" id="UP000002710">
    <property type="component" value="Chromosome"/>
</dbReference>
<dbReference type="GO" id="GO:0005829">
    <property type="term" value="C:cytosol"/>
    <property type="evidence" value="ECO:0007669"/>
    <property type="project" value="TreeGrafter"/>
</dbReference>
<dbReference type="GO" id="GO:0016829">
    <property type="term" value="F:lyase activity"/>
    <property type="evidence" value="ECO:0007669"/>
    <property type="project" value="UniProtKB-KW"/>
</dbReference>
<dbReference type="GO" id="GO:0046306">
    <property type="term" value="P:alkanesulfonate catabolic process"/>
    <property type="evidence" value="ECO:0007669"/>
    <property type="project" value="UniProtKB-UniPathway"/>
</dbReference>
<dbReference type="CDD" id="cd01677">
    <property type="entry name" value="PFL2_DhaB_BssA"/>
    <property type="match status" value="1"/>
</dbReference>
<dbReference type="Gene3D" id="3.20.70.20">
    <property type="match status" value="1"/>
</dbReference>
<dbReference type="InterPro" id="IPR019777">
    <property type="entry name" value="Form_AcTrfase_GR_CS"/>
</dbReference>
<dbReference type="InterPro" id="IPR001150">
    <property type="entry name" value="Gly_radical"/>
</dbReference>
<dbReference type="InterPro" id="IPR051215">
    <property type="entry name" value="GRE"/>
</dbReference>
<dbReference type="InterPro" id="IPR004184">
    <property type="entry name" value="PFL_dom"/>
</dbReference>
<dbReference type="PANTHER" id="PTHR43641:SF2">
    <property type="entry name" value="DEHYDRATASE YBIW-RELATED"/>
    <property type="match status" value="1"/>
</dbReference>
<dbReference type="PANTHER" id="PTHR43641">
    <property type="entry name" value="FORMATE ACETYLTRANSFERASE 3-RELATED"/>
    <property type="match status" value="1"/>
</dbReference>
<dbReference type="Pfam" id="PF01228">
    <property type="entry name" value="Gly_radical"/>
    <property type="match status" value="1"/>
</dbReference>
<dbReference type="Pfam" id="PF02901">
    <property type="entry name" value="PFL-like"/>
    <property type="match status" value="1"/>
</dbReference>
<dbReference type="SUPFAM" id="SSF51998">
    <property type="entry name" value="PFL-like glycyl radical enzymes"/>
    <property type="match status" value="1"/>
</dbReference>
<dbReference type="PROSITE" id="PS00850">
    <property type="entry name" value="GLY_RADICAL_1"/>
    <property type="match status" value="1"/>
</dbReference>
<dbReference type="PROSITE" id="PS51149">
    <property type="entry name" value="GLY_RADICAL_2"/>
    <property type="match status" value="1"/>
</dbReference>
<dbReference type="PROSITE" id="PS51554">
    <property type="entry name" value="PFL"/>
    <property type="match status" value="1"/>
</dbReference>
<keyword id="KW-0456">Lyase</keyword>
<keyword id="KW-0556">Organic radical</keyword>
<keyword id="KW-0670">Pyruvate</keyword>
<keyword id="KW-1185">Reference proteome</keyword>
<evidence type="ECO:0000250" key="1">
    <source>
        <dbReference type="UniProtKB" id="B8J0R1"/>
    </source>
</evidence>
<evidence type="ECO:0000250" key="2">
    <source>
        <dbReference type="UniProtKB" id="Q30W70"/>
    </source>
</evidence>
<evidence type="ECO:0000250" key="3">
    <source>
        <dbReference type="UniProtKB" id="Q727N1"/>
    </source>
</evidence>
<evidence type="ECO:0000255" key="4">
    <source>
        <dbReference type="PROSITE-ProRule" id="PRU00493"/>
    </source>
</evidence>
<evidence type="ECO:0000255" key="5">
    <source>
        <dbReference type="PROSITE-ProRule" id="PRU00887"/>
    </source>
</evidence>
<evidence type="ECO:0000269" key="6">
    <source>
    </source>
</evidence>
<evidence type="ECO:0000303" key="7">
    <source>
    </source>
</evidence>
<evidence type="ECO:0000305" key="8"/>
<evidence type="ECO:0000305" key="9">
    <source>
    </source>
</evidence>
<evidence type="ECO:0000312" key="10">
    <source>
        <dbReference type="EMBL" id="ABB38074.1"/>
    </source>
</evidence>
<feature type="chain" id="PRO_0000450942" description="Isethionate sulfite-lyase">
    <location>
        <begin position="1"/>
        <end position="829"/>
    </location>
</feature>
<feature type="domain" description="PFL" evidence="5">
    <location>
        <begin position="31"/>
        <end position="699"/>
    </location>
</feature>
<feature type="domain" description="Glycine radical" evidence="4">
    <location>
        <begin position="706"/>
        <end position="829"/>
    </location>
</feature>
<feature type="active site" description="Cysteine radical intermediate" evidence="2">
    <location>
        <position position="467"/>
    </location>
</feature>
<feature type="active site" description="Proton acceptor" evidence="2">
    <location>
        <position position="469"/>
    </location>
</feature>
<feature type="binding site" evidence="3">
    <location>
        <position position="188"/>
    </location>
    <ligand>
        <name>2-hydroxyethane-1-sulfonate</name>
        <dbReference type="ChEBI" id="CHEBI:61904"/>
    </ligand>
</feature>
<feature type="binding site" evidence="3">
    <location>
        <position position="192"/>
    </location>
    <ligand>
        <name>2-hydroxyethane-1-sulfonate</name>
        <dbReference type="ChEBI" id="CHEBI:61904"/>
    </ligand>
</feature>
<feature type="binding site" evidence="3">
    <location>
        <begin position="467"/>
        <end position="469"/>
    </location>
    <ligand>
        <name>2-hydroxyethane-1-sulfonate</name>
        <dbReference type="ChEBI" id="CHEBI:61904"/>
    </ligand>
</feature>
<feature type="binding site" evidence="3">
    <location>
        <position position="677"/>
    </location>
    <ligand>
        <name>2-hydroxyethane-1-sulfonate</name>
        <dbReference type="ChEBI" id="CHEBI:61904"/>
    </ligand>
</feature>
<feature type="modified residue" description="Glycine radical" evidence="4">
    <location>
        <position position="804"/>
    </location>
</feature>
<organism>
    <name type="scientific">Oleidesulfovibrio alaskensis (strain ATCC BAA-1058 / DSM 17464 / G20)</name>
    <name type="common">Desulfovibrio alaskensis</name>
    <dbReference type="NCBI Taxonomy" id="207559"/>
    <lineage>
        <taxon>Bacteria</taxon>
        <taxon>Pseudomonadati</taxon>
        <taxon>Thermodesulfobacteriota</taxon>
        <taxon>Desulfovibrionia</taxon>
        <taxon>Desulfovibrionales</taxon>
        <taxon>Desulfovibrionaceae</taxon>
        <taxon>Oleidesulfovibrio</taxon>
    </lineage>
</organism>
<reference key="1">
    <citation type="journal article" date="2011" name="J. Bacteriol.">
        <title>Complete genome sequence and updated annotation of Desulfovibrio alaskensis G20.</title>
        <authorList>
            <person name="Hauser L.J."/>
            <person name="Land M.L."/>
            <person name="Brown S.D."/>
            <person name="Larimer F."/>
            <person name="Keller K.L."/>
            <person name="Rapp-Giles B.J."/>
            <person name="Price M.N."/>
            <person name="Lin M."/>
            <person name="Bruce D.C."/>
            <person name="Detter J.C."/>
            <person name="Tapia R."/>
            <person name="Han C.S."/>
            <person name="Goodwin L.A."/>
            <person name="Cheng J.F."/>
            <person name="Pitluck S."/>
            <person name="Copeland A."/>
            <person name="Lucas S."/>
            <person name="Nolan M."/>
            <person name="Lapidus A.L."/>
            <person name="Palumbo A.V."/>
            <person name="Wall J.D."/>
        </authorList>
    </citation>
    <scope>NUCLEOTIDE SEQUENCE [LARGE SCALE GENOMIC DNA]</scope>
    <source>
        <strain>ATCC BAA-1058 / DSM 17464 / G20</strain>
    </source>
</reference>
<reference key="2">
    <citation type="journal article" date="2019" name="Proc. Natl. Acad. Sci. U.S.A.">
        <title>A glycyl radical enzyme enables hydrogen sulfide production by the human intestinal bacterium Bilophila wadsworthia.</title>
        <authorList>
            <person name="Peck S.C."/>
            <person name="Denger K."/>
            <person name="Burrichter A."/>
            <person name="Irwin S.M."/>
            <person name="Balskus E.P."/>
            <person name="Schleheck D."/>
        </authorList>
    </citation>
    <scope>FUNCTION</scope>
    <scope>INDUCTION</scope>
    <scope>PATHWAY</scope>
    <scope>DISRUPTION PHENOTYPE</scope>
    <source>
        <strain>ATCC BAA-1058 / DSM 17464 / G20</strain>
    </source>
</reference>
<accession>Q312S2</accession>